<evidence type="ECO:0000255" key="1">
    <source>
        <dbReference type="HAMAP-Rule" id="MF_00360"/>
    </source>
</evidence>
<evidence type="ECO:0000256" key="2">
    <source>
        <dbReference type="SAM" id="MobiDB-lite"/>
    </source>
</evidence>
<evidence type="ECO:0000305" key="3"/>
<dbReference type="EMBL" id="CP001103">
    <property type="protein sequence ID" value="AEA99914.1"/>
    <property type="molecule type" value="Genomic_DNA"/>
</dbReference>
<dbReference type="RefSeq" id="WP_012519955.1">
    <property type="nucleotide sequence ID" value="NC_011138.3"/>
</dbReference>
<dbReference type="SMR" id="B4S012"/>
<dbReference type="GeneID" id="56344045"/>
<dbReference type="KEGG" id="amc:MADE_1018950"/>
<dbReference type="HOGENOM" id="CLU_113441_6_1_6"/>
<dbReference type="Proteomes" id="UP000001870">
    <property type="component" value="Chromosome"/>
</dbReference>
<dbReference type="GO" id="GO:0022627">
    <property type="term" value="C:cytosolic small ribosomal subunit"/>
    <property type="evidence" value="ECO:0007669"/>
    <property type="project" value="TreeGrafter"/>
</dbReference>
<dbReference type="GO" id="GO:0070181">
    <property type="term" value="F:small ribosomal subunit rRNA binding"/>
    <property type="evidence" value="ECO:0007669"/>
    <property type="project" value="TreeGrafter"/>
</dbReference>
<dbReference type="GO" id="GO:0003735">
    <property type="term" value="F:structural constituent of ribosome"/>
    <property type="evidence" value="ECO:0007669"/>
    <property type="project" value="InterPro"/>
</dbReference>
<dbReference type="GO" id="GO:0006412">
    <property type="term" value="P:translation"/>
    <property type="evidence" value="ECO:0007669"/>
    <property type="project" value="UniProtKB-UniRule"/>
</dbReference>
<dbReference type="CDD" id="cd00473">
    <property type="entry name" value="bS6"/>
    <property type="match status" value="1"/>
</dbReference>
<dbReference type="FunFam" id="3.30.70.60:FF:000003">
    <property type="entry name" value="30S ribosomal protein S6"/>
    <property type="match status" value="1"/>
</dbReference>
<dbReference type="Gene3D" id="3.30.70.60">
    <property type="match status" value="1"/>
</dbReference>
<dbReference type="HAMAP" id="MF_00360">
    <property type="entry name" value="Ribosomal_bS6"/>
    <property type="match status" value="1"/>
</dbReference>
<dbReference type="InterPro" id="IPR000529">
    <property type="entry name" value="Ribosomal_bS6"/>
</dbReference>
<dbReference type="InterPro" id="IPR035980">
    <property type="entry name" value="Ribosomal_bS6_sf"/>
</dbReference>
<dbReference type="InterPro" id="IPR020814">
    <property type="entry name" value="Ribosomal_S6_plastid/chlpt"/>
</dbReference>
<dbReference type="InterPro" id="IPR014717">
    <property type="entry name" value="Transl_elong_EF1B/ribsomal_bS6"/>
</dbReference>
<dbReference type="NCBIfam" id="TIGR00166">
    <property type="entry name" value="S6"/>
    <property type="match status" value="1"/>
</dbReference>
<dbReference type="PANTHER" id="PTHR21011">
    <property type="entry name" value="MITOCHONDRIAL 28S RIBOSOMAL PROTEIN S6"/>
    <property type="match status" value="1"/>
</dbReference>
<dbReference type="PANTHER" id="PTHR21011:SF1">
    <property type="entry name" value="SMALL RIBOSOMAL SUBUNIT PROTEIN BS6M"/>
    <property type="match status" value="1"/>
</dbReference>
<dbReference type="Pfam" id="PF01250">
    <property type="entry name" value="Ribosomal_S6"/>
    <property type="match status" value="1"/>
</dbReference>
<dbReference type="SUPFAM" id="SSF54995">
    <property type="entry name" value="Ribosomal protein S6"/>
    <property type="match status" value="1"/>
</dbReference>
<organism>
    <name type="scientific">Alteromonas mediterranea (strain DSM 17117 / CIP 110805 / LMG 28347 / Deep ecotype)</name>
    <dbReference type="NCBI Taxonomy" id="1774373"/>
    <lineage>
        <taxon>Bacteria</taxon>
        <taxon>Pseudomonadati</taxon>
        <taxon>Pseudomonadota</taxon>
        <taxon>Gammaproteobacteria</taxon>
        <taxon>Alteromonadales</taxon>
        <taxon>Alteromonadaceae</taxon>
        <taxon>Alteromonas/Salinimonas group</taxon>
        <taxon>Alteromonas</taxon>
    </lineage>
</organism>
<proteinExistence type="inferred from homology"/>
<gene>
    <name evidence="1" type="primary">rpsF</name>
    <name type="ordered locus">MADE_1018950</name>
</gene>
<feature type="chain" id="PRO_1000120702" description="Small ribosomal subunit protein bS6">
    <location>
        <begin position="1"/>
        <end position="133"/>
    </location>
</feature>
<feature type="region of interest" description="Disordered" evidence="2">
    <location>
        <begin position="93"/>
        <end position="133"/>
    </location>
</feature>
<feature type="compositionally biased region" description="Basic and acidic residues" evidence="2">
    <location>
        <begin position="103"/>
        <end position="133"/>
    </location>
</feature>
<sequence length="133" mass="15666">MRHYEIVFMVHPDQSEQVPGMIERYTTILKQDGGQVHRLEDWGRRQLAYPIEKLHKAHYVLINAEATAEAVDELENAFRFNDVILRNMVMRTKTAVTEPSPMMKEEPRRERRDDSAPRQERAEKKTETTEDNA</sequence>
<accession>B4S012</accession>
<accession>F2G9R4</accession>
<comment type="function">
    <text evidence="1">Binds together with bS18 to 16S ribosomal RNA.</text>
</comment>
<comment type="similarity">
    <text evidence="1">Belongs to the bacterial ribosomal protein bS6 family.</text>
</comment>
<name>RS6_ALTMD</name>
<reference key="1">
    <citation type="journal article" date="2008" name="ISME J.">
        <title>Comparative genomics of two ecotypes of the marine planktonic copiotroph Alteromonas macleodii suggests alternative lifestyles associated with different kinds of particulate organic matter.</title>
        <authorList>
            <person name="Ivars-Martinez E."/>
            <person name="Martin-Cuadrado A.-B."/>
            <person name="D'Auria G."/>
            <person name="Mira A."/>
            <person name="Ferriera S."/>
            <person name="Johnson J."/>
            <person name="Friedman R."/>
            <person name="Rodriguez-Valera F."/>
        </authorList>
    </citation>
    <scope>NUCLEOTIDE SEQUENCE [LARGE SCALE GENOMIC DNA]</scope>
    <source>
        <strain>DSM 17117 / CIP 110805 / LMG 28347 / Deep ecotype</strain>
    </source>
</reference>
<protein>
    <recommendedName>
        <fullName evidence="1">Small ribosomal subunit protein bS6</fullName>
    </recommendedName>
    <alternativeName>
        <fullName evidence="3">30S ribosomal protein S6</fullName>
    </alternativeName>
</protein>
<keyword id="KW-0687">Ribonucleoprotein</keyword>
<keyword id="KW-0689">Ribosomal protein</keyword>
<keyword id="KW-0694">RNA-binding</keyword>
<keyword id="KW-0699">rRNA-binding</keyword>